<proteinExistence type="evidence at transcript level"/>
<protein>
    <recommendedName>
        <fullName>Upstream stimulatory factor</fullName>
        <shortName>USF</shortName>
    </recommendedName>
    <alternativeName>
        <fullName>SPF1</fullName>
    </alternativeName>
</protein>
<sequence>MDVQDHTLDQGPQDKDKDLEEEVTVHLTADGDQVVQDPSGEGPFAENIQYQFRTDSNGQSQVTYRVVQVGDNETNPQAVVTTFPQGHQALTQVIQGSFNGESPTSESQGGETRFTYFPASAAIPGDGAGPASGGEQQPGITQPSGAAGGQFYVMMSPQDVLQGASQRTIAPRTHQFNTKIDNSRTVRDERRRATHNEVERRRRDKINNWIVKLSKIIPDCNIDHSKQGQSKGGILTKTCDYIHDLRNSNTRMAKASRIRKGSPST</sequence>
<comment type="function">
    <text>May act as a transcription factor which recognizes the CACGTG motif on SPEC gene promoters.</text>
</comment>
<comment type="subunit">
    <text>Efficient DNA binding requires dimerization with another bHLH protein. Binds DNA as a homodimer or a heterodimer.</text>
</comment>
<comment type="subcellular location">
    <subcellularLocation>
        <location>Nucleus</location>
    </subcellularLocation>
</comment>
<comment type="tissue specificity">
    <text>Enriched in ectodermal tissue.</text>
</comment>
<name>USF_STRPU</name>
<feature type="chain" id="PRO_0000127503" description="Upstream stimulatory factor">
    <location>
        <begin position="1"/>
        <end position="265"/>
    </location>
</feature>
<feature type="domain" description="bHLH" evidence="1">
    <location>
        <begin position="190"/>
        <end position="245"/>
    </location>
</feature>
<feature type="region of interest" description="Disordered" evidence="2">
    <location>
        <begin position="1"/>
        <end position="21"/>
    </location>
</feature>
<feature type="region of interest" description="Disordered" evidence="2">
    <location>
        <begin position="119"/>
        <end position="149"/>
    </location>
</feature>
<feature type="compositionally biased region" description="Basic and acidic residues" evidence="2">
    <location>
        <begin position="1"/>
        <end position="18"/>
    </location>
</feature>
<feature type="compositionally biased region" description="Polar residues" evidence="2">
    <location>
        <begin position="134"/>
        <end position="144"/>
    </location>
</feature>
<dbReference type="EMBL" id="S69017">
    <property type="protein sequence ID" value="AAB20550.2"/>
    <property type="molecule type" value="mRNA"/>
</dbReference>
<dbReference type="PIR" id="A43899">
    <property type="entry name" value="A43899"/>
</dbReference>
<dbReference type="SMR" id="Q07956"/>
<dbReference type="FunCoup" id="Q07956">
    <property type="interactions" value="217"/>
</dbReference>
<dbReference type="STRING" id="7668.Q07956"/>
<dbReference type="eggNOG" id="KOG1318">
    <property type="taxonomic scope" value="Eukaryota"/>
</dbReference>
<dbReference type="HOGENOM" id="CLU_594921_0_0_1"/>
<dbReference type="InParanoid" id="Q07956"/>
<dbReference type="Proteomes" id="UP000007110">
    <property type="component" value="Unassembled WGS sequence"/>
</dbReference>
<dbReference type="GO" id="GO:0005634">
    <property type="term" value="C:nucleus"/>
    <property type="evidence" value="ECO:0007669"/>
    <property type="project" value="UniProtKB-SubCell"/>
</dbReference>
<dbReference type="GO" id="GO:0000981">
    <property type="term" value="F:DNA-binding transcription factor activity, RNA polymerase II-specific"/>
    <property type="evidence" value="ECO:0000318"/>
    <property type="project" value="GO_Central"/>
</dbReference>
<dbReference type="GO" id="GO:0046983">
    <property type="term" value="F:protein dimerization activity"/>
    <property type="evidence" value="ECO:0007669"/>
    <property type="project" value="InterPro"/>
</dbReference>
<dbReference type="GO" id="GO:0000978">
    <property type="term" value="F:RNA polymerase II cis-regulatory region sequence-specific DNA binding"/>
    <property type="evidence" value="ECO:0000318"/>
    <property type="project" value="GO_Central"/>
</dbReference>
<dbReference type="GO" id="GO:0006357">
    <property type="term" value="P:regulation of transcription by RNA polymerase II"/>
    <property type="evidence" value="ECO:0000318"/>
    <property type="project" value="GO_Central"/>
</dbReference>
<dbReference type="CDD" id="cd11396">
    <property type="entry name" value="bHLHzip_USF"/>
    <property type="match status" value="1"/>
</dbReference>
<dbReference type="Gene3D" id="4.10.280.10">
    <property type="entry name" value="Helix-loop-helix DNA-binding domain"/>
    <property type="match status" value="1"/>
</dbReference>
<dbReference type="InterPro" id="IPR011598">
    <property type="entry name" value="bHLH_dom"/>
</dbReference>
<dbReference type="InterPro" id="IPR036638">
    <property type="entry name" value="HLH_DNA-bd_sf"/>
</dbReference>
<dbReference type="InterPro" id="IPR051732">
    <property type="entry name" value="USF"/>
</dbReference>
<dbReference type="PANTHER" id="PTHR46117">
    <property type="entry name" value="FI24210P1"/>
    <property type="match status" value="1"/>
</dbReference>
<dbReference type="PANTHER" id="PTHR46117:SF3">
    <property type="entry name" value="FI24210P1"/>
    <property type="match status" value="1"/>
</dbReference>
<dbReference type="Pfam" id="PF00010">
    <property type="entry name" value="HLH"/>
    <property type="match status" value="1"/>
</dbReference>
<dbReference type="SMART" id="SM00353">
    <property type="entry name" value="HLH"/>
    <property type="match status" value="1"/>
</dbReference>
<dbReference type="SUPFAM" id="SSF47459">
    <property type="entry name" value="HLH, helix-loop-helix DNA-binding domain"/>
    <property type="match status" value="1"/>
</dbReference>
<dbReference type="PROSITE" id="PS50888">
    <property type="entry name" value="BHLH"/>
    <property type="match status" value="1"/>
</dbReference>
<keyword id="KW-0238">DNA-binding</keyword>
<keyword id="KW-0539">Nucleus</keyword>
<keyword id="KW-1185">Reference proteome</keyword>
<keyword id="KW-0804">Transcription</keyword>
<keyword id="KW-0805">Transcription regulation</keyword>
<evidence type="ECO:0000255" key="1">
    <source>
        <dbReference type="PROSITE-ProRule" id="PRU00981"/>
    </source>
</evidence>
<evidence type="ECO:0000256" key="2">
    <source>
        <dbReference type="SAM" id="MobiDB-lite"/>
    </source>
</evidence>
<accession>Q07956</accession>
<reference key="1">
    <citation type="journal article" date="1991" name="Dev. Biol.">
        <title>Sea urchin USF: a helix-loop-helix protein active in embryonic ectoderm cells.</title>
        <authorList>
            <person name="Kozlowski M.T."/>
            <person name="Gan L."/>
            <person name="Venuti J.M."/>
            <person name="Sawadogo M."/>
            <person name="Klein W.H."/>
        </authorList>
    </citation>
    <scope>NUCLEOTIDE SEQUENCE [MRNA]</scope>
    <source>
        <tissue>Embryo</tissue>
    </source>
</reference>
<organism>
    <name type="scientific">Strongylocentrotus purpuratus</name>
    <name type="common">Purple sea urchin</name>
    <dbReference type="NCBI Taxonomy" id="7668"/>
    <lineage>
        <taxon>Eukaryota</taxon>
        <taxon>Metazoa</taxon>
        <taxon>Echinodermata</taxon>
        <taxon>Eleutherozoa</taxon>
        <taxon>Echinozoa</taxon>
        <taxon>Echinoidea</taxon>
        <taxon>Euechinoidea</taxon>
        <taxon>Echinacea</taxon>
        <taxon>Camarodonta</taxon>
        <taxon>Echinidea</taxon>
        <taxon>Strongylocentrotidae</taxon>
        <taxon>Strongylocentrotus</taxon>
    </lineage>
</organism>